<feature type="chain" id="PRO_1000212245" description="Ribosomal RNA small subunit methyltransferase A">
    <location>
        <begin position="1"/>
        <end position="273"/>
    </location>
</feature>
<feature type="binding site" evidence="1">
    <location>
        <position position="18"/>
    </location>
    <ligand>
        <name>S-adenosyl-L-methionine</name>
        <dbReference type="ChEBI" id="CHEBI:59789"/>
    </ligand>
</feature>
<feature type="binding site" evidence="1">
    <location>
        <position position="20"/>
    </location>
    <ligand>
        <name>S-adenosyl-L-methionine</name>
        <dbReference type="ChEBI" id="CHEBI:59789"/>
    </ligand>
</feature>
<feature type="binding site" evidence="1">
    <location>
        <position position="45"/>
    </location>
    <ligand>
        <name>S-adenosyl-L-methionine</name>
        <dbReference type="ChEBI" id="CHEBI:59789"/>
    </ligand>
</feature>
<feature type="binding site" evidence="1">
    <location>
        <position position="66"/>
    </location>
    <ligand>
        <name>S-adenosyl-L-methionine</name>
        <dbReference type="ChEBI" id="CHEBI:59789"/>
    </ligand>
</feature>
<feature type="binding site" evidence="1">
    <location>
        <position position="91"/>
    </location>
    <ligand>
        <name>S-adenosyl-L-methionine</name>
        <dbReference type="ChEBI" id="CHEBI:59789"/>
    </ligand>
</feature>
<feature type="binding site" evidence="1">
    <location>
        <position position="113"/>
    </location>
    <ligand>
        <name>S-adenosyl-L-methionine</name>
        <dbReference type="ChEBI" id="CHEBI:59789"/>
    </ligand>
</feature>
<proteinExistence type="inferred from homology"/>
<evidence type="ECO:0000255" key="1">
    <source>
        <dbReference type="HAMAP-Rule" id="MF_00607"/>
    </source>
</evidence>
<keyword id="KW-0963">Cytoplasm</keyword>
<keyword id="KW-0489">Methyltransferase</keyword>
<keyword id="KW-0694">RNA-binding</keyword>
<keyword id="KW-0698">rRNA processing</keyword>
<keyword id="KW-0949">S-adenosyl-L-methionine</keyword>
<keyword id="KW-0808">Transferase</keyword>
<sequence>MNNRVHQGHLARKRFGQNFLNDQFVIDSIVSAINPQKGQAMVEIGPGLAALTEPVGERLDQLTVIELDRDLAARLQTHPFLGPKLTIYQQDAMTFNFGELAEKMGQPLRVFGNLPYNISTPLMFHLFSYTDAIADMHFMLQKEVVNRLVAGPNSKAYGRLSVMAQYYCNVIPVLEVPPSAFTPPPKVDSAVVRLVPHATMPHPVKDVRVLSRITTEAFNQRRKTIRNSLGNLFSVEVLTGMGIDPAMRAENISVAQYCQMANYLAENAPLQES</sequence>
<organism>
    <name type="scientific">Escherichia coli (strain K12 / MC4100 / BW2952)</name>
    <dbReference type="NCBI Taxonomy" id="595496"/>
    <lineage>
        <taxon>Bacteria</taxon>
        <taxon>Pseudomonadati</taxon>
        <taxon>Pseudomonadota</taxon>
        <taxon>Gammaproteobacteria</taxon>
        <taxon>Enterobacterales</taxon>
        <taxon>Enterobacteriaceae</taxon>
        <taxon>Escherichia</taxon>
    </lineage>
</organism>
<gene>
    <name evidence="1" type="primary">rsmA</name>
    <name evidence="1" type="synonym">ksgA</name>
    <name type="ordered locus">BWG_0049</name>
</gene>
<accession>C4ZPX7</accession>
<name>RSMA_ECOBW</name>
<dbReference type="EC" id="2.1.1.182" evidence="1"/>
<dbReference type="EMBL" id="CP001396">
    <property type="protein sequence ID" value="ACR65508.1"/>
    <property type="molecule type" value="Genomic_DNA"/>
</dbReference>
<dbReference type="RefSeq" id="WP_001065381.1">
    <property type="nucleotide sequence ID" value="NC_012759.1"/>
</dbReference>
<dbReference type="EMDB" id="EMD-28720"/>
<dbReference type="SMR" id="C4ZPX7"/>
<dbReference type="GeneID" id="93777384"/>
<dbReference type="KEGG" id="ebw:BWG_0049"/>
<dbReference type="HOGENOM" id="CLU_041220_0_1_6"/>
<dbReference type="GO" id="GO:0005829">
    <property type="term" value="C:cytosol"/>
    <property type="evidence" value="ECO:0007669"/>
    <property type="project" value="TreeGrafter"/>
</dbReference>
<dbReference type="GO" id="GO:0052908">
    <property type="term" value="F:16S rRNA (adenine(1518)-N(6)/adenine(1519)-N(6))-dimethyltransferase activity"/>
    <property type="evidence" value="ECO:0007669"/>
    <property type="project" value="UniProtKB-EC"/>
</dbReference>
<dbReference type="GO" id="GO:0003723">
    <property type="term" value="F:RNA binding"/>
    <property type="evidence" value="ECO:0007669"/>
    <property type="project" value="UniProtKB-KW"/>
</dbReference>
<dbReference type="FunFam" id="1.10.8.100:FF:000001">
    <property type="entry name" value="Ribosomal RNA small subunit methyltransferase A"/>
    <property type="match status" value="1"/>
</dbReference>
<dbReference type="FunFam" id="3.40.50.150:FF:000006">
    <property type="entry name" value="Ribosomal RNA small subunit methyltransferase A"/>
    <property type="match status" value="1"/>
</dbReference>
<dbReference type="Gene3D" id="1.10.8.100">
    <property type="entry name" value="Ribosomal RNA adenine dimethylase-like, domain 2"/>
    <property type="match status" value="1"/>
</dbReference>
<dbReference type="Gene3D" id="3.40.50.150">
    <property type="entry name" value="Vaccinia Virus protein VP39"/>
    <property type="match status" value="1"/>
</dbReference>
<dbReference type="HAMAP" id="MF_00607">
    <property type="entry name" value="16SrRNA_methyltr_A"/>
    <property type="match status" value="1"/>
</dbReference>
<dbReference type="InterPro" id="IPR001737">
    <property type="entry name" value="KsgA/Erm"/>
</dbReference>
<dbReference type="InterPro" id="IPR023165">
    <property type="entry name" value="rRNA_Ade_diMease-like_C"/>
</dbReference>
<dbReference type="InterPro" id="IPR020596">
    <property type="entry name" value="rRNA_Ade_Mease_Trfase_CS"/>
</dbReference>
<dbReference type="InterPro" id="IPR020598">
    <property type="entry name" value="rRNA_Ade_methylase_Trfase_N"/>
</dbReference>
<dbReference type="InterPro" id="IPR011530">
    <property type="entry name" value="rRNA_adenine_dimethylase"/>
</dbReference>
<dbReference type="InterPro" id="IPR029063">
    <property type="entry name" value="SAM-dependent_MTases_sf"/>
</dbReference>
<dbReference type="NCBIfam" id="TIGR00755">
    <property type="entry name" value="ksgA"/>
    <property type="match status" value="1"/>
</dbReference>
<dbReference type="PANTHER" id="PTHR11727">
    <property type="entry name" value="DIMETHYLADENOSINE TRANSFERASE"/>
    <property type="match status" value="1"/>
</dbReference>
<dbReference type="PANTHER" id="PTHR11727:SF7">
    <property type="entry name" value="DIMETHYLADENOSINE TRANSFERASE-RELATED"/>
    <property type="match status" value="1"/>
</dbReference>
<dbReference type="Pfam" id="PF00398">
    <property type="entry name" value="RrnaAD"/>
    <property type="match status" value="1"/>
</dbReference>
<dbReference type="SMART" id="SM00650">
    <property type="entry name" value="rADc"/>
    <property type="match status" value="1"/>
</dbReference>
<dbReference type="SUPFAM" id="SSF53335">
    <property type="entry name" value="S-adenosyl-L-methionine-dependent methyltransferases"/>
    <property type="match status" value="1"/>
</dbReference>
<dbReference type="PROSITE" id="PS01131">
    <property type="entry name" value="RRNA_A_DIMETH"/>
    <property type="match status" value="1"/>
</dbReference>
<dbReference type="PROSITE" id="PS51689">
    <property type="entry name" value="SAM_RNA_A_N6_MT"/>
    <property type="match status" value="1"/>
</dbReference>
<comment type="function">
    <text evidence="1">Specifically dimethylates two adjacent adenosines (A1518 and A1519) in the loop of a conserved hairpin near the 3'-end of 16S rRNA in the 30S particle. May play a critical role in biogenesis of 30S subunits.</text>
</comment>
<comment type="catalytic activity">
    <reaction evidence="1">
        <text>adenosine(1518)/adenosine(1519) in 16S rRNA + 4 S-adenosyl-L-methionine = N(6)-dimethyladenosine(1518)/N(6)-dimethyladenosine(1519) in 16S rRNA + 4 S-adenosyl-L-homocysteine + 4 H(+)</text>
        <dbReference type="Rhea" id="RHEA:19609"/>
        <dbReference type="Rhea" id="RHEA-COMP:10232"/>
        <dbReference type="Rhea" id="RHEA-COMP:10233"/>
        <dbReference type="ChEBI" id="CHEBI:15378"/>
        <dbReference type="ChEBI" id="CHEBI:57856"/>
        <dbReference type="ChEBI" id="CHEBI:59789"/>
        <dbReference type="ChEBI" id="CHEBI:74411"/>
        <dbReference type="ChEBI" id="CHEBI:74493"/>
        <dbReference type="EC" id="2.1.1.182"/>
    </reaction>
</comment>
<comment type="subcellular location">
    <subcellularLocation>
        <location evidence="1">Cytoplasm</location>
    </subcellularLocation>
</comment>
<comment type="similarity">
    <text evidence="1">Belongs to the class I-like SAM-binding methyltransferase superfamily. rRNA adenine N(6)-methyltransferase family. RsmA subfamily.</text>
</comment>
<reference key="1">
    <citation type="journal article" date="2009" name="J. Bacteriol.">
        <title>Genomic sequencing reveals regulatory mutations and recombinational events in the widely used MC4100 lineage of Escherichia coli K-12.</title>
        <authorList>
            <person name="Ferenci T."/>
            <person name="Zhou Z."/>
            <person name="Betteridge T."/>
            <person name="Ren Y."/>
            <person name="Liu Y."/>
            <person name="Feng L."/>
            <person name="Reeves P.R."/>
            <person name="Wang L."/>
        </authorList>
    </citation>
    <scope>NUCLEOTIDE SEQUENCE [LARGE SCALE GENOMIC DNA]</scope>
    <source>
        <strain>K12 / MC4100 / BW2952</strain>
    </source>
</reference>
<protein>
    <recommendedName>
        <fullName evidence="1">Ribosomal RNA small subunit methyltransferase A</fullName>
        <ecNumber evidence="1">2.1.1.182</ecNumber>
    </recommendedName>
    <alternativeName>
        <fullName evidence="1">16S rRNA (adenine(1518)-N(6)/adenine(1519)-N(6))-dimethyltransferase</fullName>
    </alternativeName>
    <alternativeName>
        <fullName evidence="1">16S rRNA dimethyladenosine transferase</fullName>
    </alternativeName>
    <alternativeName>
        <fullName evidence="1">16S rRNA dimethylase</fullName>
    </alternativeName>
    <alternativeName>
        <fullName evidence="1">S-adenosylmethionine-6-N', N'-adenosyl(rRNA) dimethyltransferase</fullName>
    </alternativeName>
</protein>